<evidence type="ECO:0000250" key="1"/>
<evidence type="ECO:0000255" key="2"/>
<evidence type="ECO:0000256" key="3">
    <source>
        <dbReference type="SAM" id="MobiDB-lite"/>
    </source>
</evidence>
<evidence type="ECO:0000269" key="4">
    <source>
    </source>
</evidence>
<evidence type="ECO:0000305" key="5">
    <source>
    </source>
</evidence>
<reference key="1">
    <citation type="journal article" date="1997" name="J. Biol. Chem.">
        <title>A novel family of small cysteine-rich antimicrobial peptides from seed of Impatiens balsamina is derived from a single precursor protein.</title>
        <authorList>
            <person name="Tailor R.H."/>
            <person name="Acland D.P."/>
            <person name="Attenborough S."/>
            <person name="Cammue B.P.A."/>
            <person name="Evans I.J."/>
            <person name="Osborn R.W."/>
            <person name="Ray J.A."/>
            <person name="Rees S.B."/>
            <person name="Broekaert W.F."/>
        </authorList>
    </citation>
    <scope>NUCLEOTIDE SEQUENCE [MRNA]</scope>
    <scope>PARTIAL PROTEIN SEQUENCE</scope>
    <scope>PYROGLUTAMATE FORMATION AT GLN-55; GLN-103; GLN-149; GLN-197; GLN-233 AND GLN-279</scope>
    <scope>MASS SPECTROMETRY</scope>
    <source>
        <tissue>Seed</tissue>
    </source>
</reference>
<reference key="2">
    <citation type="journal article" date="1998" name="Biochemistry">
        <title>Structural studies of Impatiens balsamina antimicrobial protein (Ib-AMP1).</title>
        <authorList>
            <person name="Patel S.U."/>
            <person name="Osborn R.W."/>
            <person name="Rees S.B."/>
            <person name="Thornton J.M."/>
        </authorList>
    </citation>
    <scope>STRUCTURE BY NMR OF IB-AMP1</scope>
</reference>
<comment type="function">
    <text>Plays a role in the defense of the germinating seed against microorganisms, by inhibiting the growth of a range of filamentous fungi and bacteria, especially Gram-positive bacteria. Not cytotoxic for cultured human cells and are the smallest known plant-derived antimicrobial peptides. Peptide IB-AMP4 has a higher antifungal activity than IB-AMP1.</text>
</comment>
<comment type="subcellular location">
    <subcellularLocation>
        <location>Secreted</location>
    </subcellularLocation>
</comment>
<comment type="developmental stage">
    <text>Highly expressed in dry mature seed and by the stages 2-5 of developing seed. The peptide IB-AMP1 is also detected at early stages of germination (24 hours and 48 hours postgermination).</text>
</comment>
<comment type="domain">
    <text>Contains repeated alternating basic mature peptide and acidic propeptide domains.</text>
</comment>
<comment type="PTM">
    <text>The N-terminal of all peptides are blocked.</text>
</comment>
<comment type="PTM">
    <text>The 4 cysteine residues of all peptides are involved in intrachain disulfide bonds.</text>
</comment>
<comment type="mass spectrometry">
    <molecule>Basic peptide AMP3</molecule>
</comment>
<comment type="mass spectrometry">
    <molecule>Basic peptide AMP1-1</molecule>
</comment>
<comment type="mass spectrometry">
    <molecule>Basic peptide AMP2</molecule>
</comment>
<comment type="mass spectrometry">
    <molecule>Basic peptide AMP4</molecule>
</comment>
<name>AMP_IMPBA</name>
<protein>
    <recommendedName>
        <fullName>Antimicrobial peptides</fullName>
    </recommendedName>
    <alternativeName>
        <fullName>IB-AMP</fullName>
    </alternativeName>
    <component>
        <recommendedName>
            <fullName>Basic peptide AMP3</fullName>
        </recommendedName>
        <alternativeName>
            <fullName>IB-AMP3</fullName>
        </alternativeName>
    </component>
    <component>
        <recommendedName>
            <fullName>Basic peptide AMP1-1</fullName>
        </recommendedName>
        <alternativeName>
            <fullName>IB-AMP1-1</fullName>
        </alternativeName>
    </component>
    <component>
        <recommendedName>
            <fullName>Basic peptide AMP1-2</fullName>
        </recommendedName>
        <alternativeName>
            <fullName>IB-AMP1-2</fullName>
        </alternativeName>
    </component>
    <component>
        <recommendedName>
            <fullName>Basic peptide AMP1-3</fullName>
        </recommendedName>
        <alternativeName>
            <fullName>IB-AMP1-3</fullName>
        </alternativeName>
    </component>
    <component>
        <recommendedName>
            <fullName>Basic peptide AMP2</fullName>
        </recommendedName>
        <alternativeName>
            <fullName>IB-AMP2</fullName>
        </alternativeName>
    </component>
    <component>
        <recommendedName>
            <fullName>Basic peptide AMP4</fullName>
        </recommendedName>
        <alternativeName>
            <fullName>IB-AMP4</fullName>
        </alternativeName>
    </component>
</protein>
<gene>
    <name type="primary">AMP</name>
</gene>
<sequence>MVQKGVVFGVLLILFICSTLTSADSKPNPTKEEEPAKKPDEVSVKSGGPEVSEDQYRHRCCAWGPGRKYCKRWCANAEEAAAAIPEASEELAQEEAPVYSEDQWGRRCCGWGPGRRYCVRWCQNAEEAAAAIPEATEKAQEAPVYSEDQWGRRCCGWGPGRRYCVRWCQNAEEAAAAVAIPEASEKAQEGPVYSEDQWGRRCCGWGPGRRYCVRWCSNAADEVATPEDVEPGQYGRRCCNWGPGRRYCKRWCHNAAEEATLKAFEEEAAREQPVYSEDQWGRRCCGWGPGRRYCRRWCQSAEEAAAFQAGEVTASLMLIMFKACPCMGPVPSV</sequence>
<proteinExistence type="evidence at protein level"/>
<keyword id="KW-0044">Antibiotic</keyword>
<keyword id="KW-0929">Antimicrobial</keyword>
<keyword id="KW-0165">Cleavage on pair of basic residues</keyword>
<keyword id="KW-0903">Direct protein sequencing</keyword>
<keyword id="KW-1015">Disulfide bond</keyword>
<keyword id="KW-0295">Fungicide</keyword>
<keyword id="KW-0611">Plant defense</keyword>
<keyword id="KW-0873">Pyrrolidone carboxylic acid</keyword>
<keyword id="KW-0677">Repeat</keyword>
<keyword id="KW-0964">Secreted</keyword>
<keyword id="KW-0732">Signal</keyword>
<organism>
    <name type="scientific">Impatiens balsamina</name>
    <name type="common">Balsam</name>
    <dbReference type="NCBI Taxonomy" id="63779"/>
    <lineage>
        <taxon>Eukaryota</taxon>
        <taxon>Viridiplantae</taxon>
        <taxon>Streptophyta</taxon>
        <taxon>Embryophyta</taxon>
        <taxon>Tracheophyta</taxon>
        <taxon>Spermatophyta</taxon>
        <taxon>Magnoliopsida</taxon>
        <taxon>eudicotyledons</taxon>
        <taxon>Gunneridae</taxon>
        <taxon>Pentapetalae</taxon>
        <taxon>asterids</taxon>
        <taxon>Ericales</taxon>
        <taxon>Balsaminaceae</taxon>
        <taxon>Impatiens</taxon>
        <taxon>Impatiens subgen. Impatiens</taxon>
        <taxon>Impatiens sect. Uniflorae</taxon>
    </lineage>
</organism>
<feature type="signal peptide" evidence="2">
    <location>
        <begin position="1"/>
        <end position="23"/>
    </location>
</feature>
<feature type="propeptide" id="PRO_0000020710" description="Acidic peptide 1">
    <location>
        <begin position="24"/>
        <end position="54"/>
    </location>
</feature>
<feature type="peptide" id="PRO_0000020711" description="Basic peptide AMP3">
    <location>
        <begin position="55"/>
        <end position="74"/>
    </location>
</feature>
<feature type="propeptide" id="PRO_0000020712" description="Acidic peptide 2">
    <location>
        <begin position="75"/>
        <end position="102"/>
    </location>
</feature>
<feature type="peptide" id="PRO_0000020713" description="Basic peptide AMP1-1">
    <location>
        <begin position="103"/>
        <end position="122"/>
    </location>
</feature>
<feature type="propeptide" id="PRO_0000020714" description="Acidic peptide 3">
    <location>
        <begin position="123"/>
        <end position="148"/>
    </location>
</feature>
<feature type="peptide" id="PRO_0000020715" description="Basic peptide AMP1-2">
    <location>
        <begin position="149"/>
        <end position="168"/>
    </location>
</feature>
<feature type="propeptide" id="PRO_0000020716" description="Acidic peptide 4">
    <location>
        <begin position="169"/>
        <end position="196"/>
    </location>
</feature>
<feature type="peptide" id="PRO_0000020717" description="Basic peptide AMP1-3">
    <location>
        <begin position="197"/>
        <end position="216"/>
    </location>
</feature>
<feature type="propeptide" id="PRO_0000020718" description="Acidic peptide 5">
    <location>
        <begin position="217"/>
        <end position="232"/>
    </location>
</feature>
<feature type="peptide" id="PRO_0000020719" description="Basic peptide AMP2">
    <location>
        <begin position="233"/>
        <end position="252"/>
    </location>
</feature>
<feature type="propeptide" id="PRO_0000020720" description="Acidic peptide 6">
    <location>
        <begin position="253"/>
        <end position="278"/>
    </location>
</feature>
<feature type="peptide" id="PRO_0000020721" description="Basic peptide AMP4">
    <location>
        <begin position="279"/>
        <end position="298"/>
    </location>
</feature>
<feature type="propeptide" id="PRO_0000020722" description="Acidic peptide 7">
    <location>
        <begin position="299"/>
        <end position="333"/>
    </location>
</feature>
<feature type="region of interest" description="Disordered" evidence="3">
    <location>
        <begin position="23"/>
        <end position="52"/>
    </location>
</feature>
<feature type="compositionally biased region" description="Basic and acidic residues" evidence="3">
    <location>
        <begin position="29"/>
        <end position="43"/>
    </location>
</feature>
<feature type="modified residue" description="Pyrrolidone carboxylic acid" evidence="5">
    <location>
        <position position="55"/>
    </location>
</feature>
<feature type="modified residue" description="Pyrrolidone carboxylic acid" evidence="5">
    <location>
        <position position="103"/>
    </location>
</feature>
<feature type="modified residue" description="Pyrrolidone carboxylic acid" evidence="5">
    <location>
        <position position="149"/>
    </location>
</feature>
<feature type="modified residue" description="Pyrrolidone carboxylic acid" evidence="5">
    <location>
        <position position="197"/>
    </location>
</feature>
<feature type="modified residue" description="Pyrrolidone carboxylic acid" evidence="5">
    <location>
        <position position="233"/>
    </location>
</feature>
<feature type="modified residue" description="Pyrrolidone carboxylic acid" evidence="5">
    <location>
        <position position="279"/>
    </location>
</feature>
<feature type="disulfide bond" evidence="1">
    <location>
        <begin position="60"/>
        <end position="70"/>
    </location>
</feature>
<feature type="disulfide bond" evidence="1">
    <location>
        <begin position="61"/>
        <end position="74"/>
    </location>
</feature>
<feature type="disulfide bond">
    <location>
        <begin position="108"/>
        <end position="118"/>
    </location>
</feature>
<feature type="disulfide bond">
    <location>
        <begin position="109"/>
        <end position="122"/>
    </location>
</feature>
<feature type="disulfide bond">
    <location>
        <begin position="154"/>
        <end position="164"/>
    </location>
</feature>
<feature type="disulfide bond">
    <location>
        <begin position="155"/>
        <end position="168"/>
    </location>
</feature>
<feature type="disulfide bond">
    <location>
        <begin position="202"/>
        <end position="212"/>
    </location>
</feature>
<feature type="disulfide bond">
    <location>
        <begin position="203"/>
        <end position="216"/>
    </location>
</feature>
<feature type="disulfide bond" evidence="1">
    <location>
        <begin position="238"/>
        <end position="248"/>
    </location>
</feature>
<feature type="disulfide bond" evidence="1">
    <location>
        <begin position="239"/>
        <end position="252"/>
    </location>
</feature>
<feature type="disulfide bond" evidence="1">
    <location>
        <begin position="284"/>
        <end position="294"/>
    </location>
</feature>
<feature type="disulfide bond" evidence="1">
    <location>
        <begin position="285"/>
        <end position="298"/>
    </location>
</feature>
<accession>O24006</accession>
<dbReference type="EMBL" id="Y14369">
    <property type="protein sequence ID" value="CAA74738.1"/>
    <property type="molecule type" value="mRNA"/>
</dbReference>
<dbReference type="GO" id="GO:0005576">
    <property type="term" value="C:extracellular region"/>
    <property type="evidence" value="ECO:0007669"/>
    <property type="project" value="UniProtKB-SubCell"/>
</dbReference>
<dbReference type="GO" id="GO:0042742">
    <property type="term" value="P:defense response to bacterium"/>
    <property type="evidence" value="ECO:0007669"/>
    <property type="project" value="UniProtKB-KW"/>
</dbReference>
<dbReference type="GO" id="GO:0050832">
    <property type="term" value="P:defense response to fungus"/>
    <property type="evidence" value="ECO:0007669"/>
    <property type="project" value="UniProtKB-KW"/>
</dbReference>
<dbReference type="GO" id="GO:0031640">
    <property type="term" value="P:killing of cells of another organism"/>
    <property type="evidence" value="ECO:0007669"/>
    <property type="project" value="UniProtKB-KW"/>
</dbReference>